<organism>
    <name type="scientific">Treponema denticola (strain ATCC 35405 / DSM 14222 / CIP 103919 / JCM 8153 / KCTC 15104)</name>
    <dbReference type="NCBI Taxonomy" id="243275"/>
    <lineage>
        <taxon>Bacteria</taxon>
        <taxon>Pseudomonadati</taxon>
        <taxon>Spirochaetota</taxon>
        <taxon>Spirochaetia</taxon>
        <taxon>Spirochaetales</taxon>
        <taxon>Treponemataceae</taxon>
        <taxon>Treponema</taxon>
    </lineage>
</organism>
<protein>
    <recommendedName>
        <fullName evidence="1">Isoleucine--tRNA ligase</fullName>
        <ecNumber evidence="1">6.1.1.5</ecNumber>
    </recommendedName>
    <alternativeName>
        <fullName evidence="1">Isoleucyl-tRNA synthetase</fullName>
        <shortName evidence="1">IleRS</shortName>
    </alternativeName>
</protein>
<comment type="function">
    <text evidence="1">Catalyzes the attachment of isoleucine to tRNA(Ile). As IleRS can inadvertently accommodate and process structurally similar amino acids such as valine, to avoid such errors it has two additional distinct tRNA(Ile)-dependent editing activities. One activity is designated as 'pretransfer' editing and involves the hydrolysis of activated Val-AMP. The other activity is designated 'posttransfer' editing and involves deacylation of mischarged Val-tRNA(Ile).</text>
</comment>
<comment type="catalytic activity">
    <reaction evidence="1">
        <text>tRNA(Ile) + L-isoleucine + ATP = L-isoleucyl-tRNA(Ile) + AMP + diphosphate</text>
        <dbReference type="Rhea" id="RHEA:11060"/>
        <dbReference type="Rhea" id="RHEA-COMP:9666"/>
        <dbReference type="Rhea" id="RHEA-COMP:9695"/>
        <dbReference type="ChEBI" id="CHEBI:30616"/>
        <dbReference type="ChEBI" id="CHEBI:33019"/>
        <dbReference type="ChEBI" id="CHEBI:58045"/>
        <dbReference type="ChEBI" id="CHEBI:78442"/>
        <dbReference type="ChEBI" id="CHEBI:78528"/>
        <dbReference type="ChEBI" id="CHEBI:456215"/>
        <dbReference type="EC" id="6.1.1.5"/>
    </reaction>
</comment>
<comment type="cofactor">
    <cofactor evidence="1">
        <name>Zn(2+)</name>
        <dbReference type="ChEBI" id="CHEBI:29105"/>
    </cofactor>
</comment>
<comment type="subunit">
    <text evidence="1">Monomer.</text>
</comment>
<comment type="subcellular location">
    <subcellularLocation>
        <location evidence="1">Cytoplasm</location>
    </subcellularLocation>
</comment>
<comment type="domain">
    <text evidence="1">IleRS has two distinct active sites: one for aminoacylation and one for editing. The misactivated valine is translocated from the active site to the editing site, which sterically excludes the correctly activated isoleucine. The single editing site contains two valyl binding pockets, one specific for each substrate (Val-AMP or Val-tRNA(Ile)).</text>
</comment>
<comment type="similarity">
    <text evidence="1">Belongs to the class-I aminoacyl-tRNA synthetase family. IleS type 2 subfamily.</text>
</comment>
<proteinExistence type="inferred from homology"/>
<evidence type="ECO:0000255" key="1">
    <source>
        <dbReference type="HAMAP-Rule" id="MF_02003"/>
    </source>
</evidence>
<keyword id="KW-0030">Aminoacyl-tRNA synthetase</keyword>
<keyword id="KW-0067">ATP-binding</keyword>
<keyword id="KW-0963">Cytoplasm</keyword>
<keyword id="KW-0436">Ligase</keyword>
<keyword id="KW-0479">Metal-binding</keyword>
<keyword id="KW-0547">Nucleotide-binding</keyword>
<keyword id="KW-0648">Protein biosynthesis</keyword>
<keyword id="KW-1185">Reference proteome</keyword>
<keyword id="KW-0862">Zinc</keyword>
<gene>
    <name evidence="1" type="primary">ileS</name>
    <name type="ordered locus">TDE_2663</name>
</gene>
<accession>Q73JB2</accession>
<name>SYI_TREDE</name>
<reference key="1">
    <citation type="journal article" date="2004" name="Proc. Natl. Acad. Sci. U.S.A.">
        <title>Comparison of the genome of the oral pathogen Treponema denticola with other spirochete genomes.</title>
        <authorList>
            <person name="Seshadri R."/>
            <person name="Myers G.S.A."/>
            <person name="Tettelin H."/>
            <person name="Eisen J.A."/>
            <person name="Heidelberg J.F."/>
            <person name="Dodson R.J."/>
            <person name="Davidsen T.M."/>
            <person name="DeBoy R.T."/>
            <person name="Fouts D.E."/>
            <person name="Haft D.H."/>
            <person name="Selengut J."/>
            <person name="Ren Q."/>
            <person name="Brinkac L.M."/>
            <person name="Madupu R."/>
            <person name="Kolonay J.F."/>
            <person name="Durkin S.A."/>
            <person name="Daugherty S.C."/>
            <person name="Shetty J."/>
            <person name="Shvartsbeyn A."/>
            <person name="Gebregeorgis E."/>
            <person name="Geer K."/>
            <person name="Tsegaye G."/>
            <person name="Malek J.A."/>
            <person name="Ayodeji B."/>
            <person name="Shatsman S."/>
            <person name="McLeod M.P."/>
            <person name="Smajs D."/>
            <person name="Howell J.K."/>
            <person name="Pal S."/>
            <person name="Amin A."/>
            <person name="Vashisth P."/>
            <person name="McNeill T.Z."/>
            <person name="Xiang Q."/>
            <person name="Sodergren E."/>
            <person name="Baca E."/>
            <person name="Weinstock G.M."/>
            <person name="Norris S.J."/>
            <person name="Fraser C.M."/>
            <person name="Paulsen I.T."/>
        </authorList>
    </citation>
    <scope>NUCLEOTIDE SEQUENCE [LARGE SCALE GENOMIC DNA]</scope>
    <source>
        <strain>ATCC 35405 / DSM 14222 / CIP 103919 / JCM 8153 / KCTC 15104</strain>
    </source>
</reference>
<sequence length="1100" mass="125760">MYKPVDPKVDFAKQEEDVLKFWEKNDVFKKSVSSRDGRDNYIFFDGPPFATGLPHFGHFVPGTIKDIIPRYKTMKGFRVERRFGWDCHGLPVENLIEKELGLNSKTDIEKYGIDKFNEACRASVLRYVKEWKQTITRLGRWVDFENDYKTMEPAFMESIWWVMKSLWEKGLLYEGYYILPYCPRCSTVLSNHELNLGGYKDVHDPAITVRFKTLSPVKTSPAGKAFEGKNALPSDTYLLAWTTTPWTLPSNLGLAVGADIDYALIEYDGAHYIMAVPRLEAYFAKSGKEEAKEYKLIWTKKGAELEGLRYEPLFPYFKNLAADENGKNAEAGQGAFRVLIGDFVTTEDGTGIVHTAPGFGEDDNRIFKDTGVPTVCPVDAECKFTHEVSDYQGLFVKDADKQIMERLKTEGKLFKKAQILHSYPHCWRCSSPLIYRAVASWFVSVTKIKDKLLNANSKINWQPDHIKTGRFGKWLEGARDWAISRNRYWGNPIPIWKCPDCGETICVGSREELKELSGVFPEDMHKHFVDKISIPCKKCGGTMKRVSEVLDCWFESGSMPYAQQHYPFENKEHFEKNFPADFISEGLDQTRGWFYTLTILAAALFDEPAFKNCIVNGLVLAEDGKKMSKSLRNYTDPNEVIKQFGADALRLFLMNSNVVKADDLKYSDEGVRDVLKGILIPFWNSYSFYITYANIDGVKPPHNAKVDGKDEGVEEFLAKLNNPLDLWILSVTEKLVADVTEALDKYDLSQAIPPMVEYIDLLNNWYIRRSRRRFWKSENDGDKSQAYETLYRALKKFSLVAAPVVPFITESIWQNLRTESDALSIHLADYPDYNEKIRNSELEFKMKTVQKAVSMGRALRYQFNLKIRQPLKAVEIVTLNPEEKRVLLEMEESIIEELNVKEVIFHEKEDELVEYSAKANFKVLGKELGPLMKKAAAIIEQMNSSEIQNIMEGATLSIDIEGKSVEITADKIVINRIEKASLKIVNEGTLTVGLNTELTEELLMEGYIRDLVRGIQTLRKECGLDVTDRIKLYLSASQKNADNKELEKAFELFKDYVCDETLTVQSSWLKTGELTKLGSIKTSLVEAGDYEWEIGIEKNN</sequence>
<feature type="chain" id="PRO_0000098568" description="Isoleucine--tRNA ligase">
    <location>
        <begin position="1"/>
        <end position="1100"/>
    </location>
</feature>
<feature type="short sequence motif" description="'HIGH' region">
    <location>
        <begin position="48"/>
        <end position="58"/>
    </location>
</feature>
<feature type="short sequence motif" description="'KMSKS' region">
    <location>
        <begin position="626"/>
        <end position="630"/>
    </location>
</feature>
<feature type="binding site" evidence="1">
    <location>
        <position position="629"/>
    </location>
    <ligand>
        <name>ATP</name>
        <dbReference type="ChEBI" id="CHEBI:30616"/>
    </ligand>
</feature>
<dbReference type="EC" id="6.1.1.5" evidence="1"/>
<dbReference type="EMBL" id="AE017226">
    <property type="protein sequence ID" value="AAS13180.1"/>
    <property type="molecule type" value="Genomic_DNA"/>
</dbReference>
<dbReference type="RefSeq" id="NP_973261.1">
    <property type="nucleotide sequence ID" value="NC_002967.9"/>
</dbReference>
<dbReference type="RefSeq" id="WP_002680710.1">
    <property type="nucleotide sequence ID" value="NC_002967.9"/>
</dbReference>
<dbReference type="SMR" id="Q73JB2"/>
<dbReference type="STRING" id="243275.TDE_2663"/>
<dbReference type="PaxDb" id="243275-TDE_2663"/>
<dbReference type="GeneID" id="2741108"/>
<dbReference type="KEGG" id="tde:TDE_2663"/>
<dbReference type="PATRIC" id="fig|243275.7.peg.2517"/>
<dbReference type="eggNOG" id="COG0060">
    <property type="taxonomic scope" value="Bacteria"/>
</dbReference>
<dbReference type="HOGENOM" id="CLU_001493_1_1_12"/>
<dbReference type="OrthoDB" id="9810365at2"/>
<dbReference type="Proteomes" id="UP000008212">
    <property type="component" value="Chromosome"/>
</dbReference>
<dbReference type="GO" id="GO:0005737">
    <property type="term" value="C:cytoplasm"/>
    <property type="evidence" value="ECO:0007669"/>
    <property type="project" value="UniProtKB-SubCell"/>
</dbReference>
<dbReference type="GO" id="GO:0002161">
    <property type="term" value="F:aminoacyl-tRNA deacylase activity"/>
    <property type="evidence" value="ECO:0007669"/>
    <property type="project" value="InterPro"/>
</dbReference>
<dbReference type="GO" id="GO:0005524">
    <property type="term" value="F:ATP binding"/>
    <property type="evidence" value="ECO:0007669"/>
    <property type="project" value="UniProtKB-UniRule"/>
</dbReference>
<dbReference type="GO" id="GO:0004822">
    <property type="term" value="F:isoleucine-tRNA ligase activity"/>
    <property type="evidence" value="ECO:0007669"/>
    <property type="project" value="UniProtKB-UniRule"/>
</dbReference>
<dbReference type="GO" id="GO:0000049">
    <property type="term" value="F:tRNA binding"/>
    <property type="evidence" value="ECO:0007669"/>
    <property type="project" value="InterPro"/>
</dbReference>
<dbReference type="GO" id="GO:0008270">
    <property type="term" value="F:zinc ion binding"/>
    <property type="evidence" value="ECO:0007669"/>
    <property type="project" value="UniProtKB-UniRule"/>
</dbReference>
<dbReference type="GO" id="GO:0006428">
    <property type="term" value="P:isoleucyl-tRNA aminoacylation"/>
    <property type="evidence" value="ECO:0007669"/>
    <property type="project" value="UniProtKB-UniRule"/>
</dbReference>
<dbReference type="CDD" id="cd07961">
    <property type="entry name" value="Anticodon_Ia_Ile_ABEc"/>
    <property type="match status" value="1"/>
</dbReference>
<dbReference type="CDD" id="cd00818">
    <property type="entry name" value="IleRS_core"/>
    <property type="match status" value="1"/>
</dbReference>
<dbReference type="FunFam" id="3.40.50.620:FF:000063">
    <property type="entry name" value="Isoleucine--tRNA ligase"/>
    <property type="match status" value="1"/>
</dbReference>
<dbReference type="FunFam" id="3.40.50.620:FF:000133">
    <property type="entry name" value="Isoleucyl-tRNA synthetase, cytoplasmic"/>
    <property type="match status" value="1"/>
</dbReference>
<dbReference type="Gene3D" id="3.40.50.620">
    <property type="entry name" value="HUPs"/>
    <property type="match status" value="2"/>
</dbReference>
<dbReference type="Gene3D" id="1.10.730.10">
    <property type="entry name" value="Isoleucyl-tRNA Synthetase, Domain 1"/>
    <property type="match status" value="1"/>
</dbReference>
<dbReference type="HAMAP" id="MF_02003">
    <property type="entry name" value="Ile_tRNA_synth_type2"/>
    <property type="match status" value="1"/>
</dbReference>
<dbReference type="InterPro" id="IPR002300">
    <property type="entry name" value="aa-tRNA-synth_Ia"/>
</dbReference>
<dbReference type="InterPro" id="IPR033709">
    <property type="entry name" value="Anticodon_Ile_ABEc"/>
</dbReference>
<dbReference type="InterPro" id="IPR002301">
    <property type="entry name" value="Ile-tRNA-ligase"/>
</dbReference>
<dbReference type="InterPro" id="IPR023586">
    <property type="entry name" value="Ile-tRNA-ligase_type2"/>
</dbReference>
<dbReference type="InterPro" id="IPR013155">
    <property type="entry name" value="M/V/L/I-tRNA-synth_anticd-bd"/>
</dbReference>
<dbReference type="InterPro" id="IPR014729">
    <property type="entry name" value="Rossmann-like_a/b/a_fold"/>
</dbReference>
<dbReference type="InterPro" id="IPR009080">
    <property type="entry name" value="tRNAsynth_Ia_anticodon-bd"/>
</dbReference>
<dbReference type="InterPro" id="IPR009008">
    <property type="entry name" value="Val/Leu/Ile-tRNA-synth_edit"/>
</dbReference>
<dbReference type="NCBIfam" id="TIGR00392">
    <property type="entry name" value="ileS"/>
    <property type="match status" value="1"/>
</dbReference>
<dbReference type="PANTHER" id="PTHR42780:SF1">
    <property type="entry name" value="ISOLEUCINE--TRNA LIGASE, CYTOPLASMIC"/>
    <property type="match status" value="1"/>
</dbReference>
<dbReference type="PANTHER" id="PTHR42780">
    <property type="entry name" value="SOLEUCYL-TRNA SYNTHETASE"/>
    <property type="match status" value="1"/>
</dbReference>
<dbReference type="Pfam" id="PF08264">
    <property type="entry name" value="Anticodon_1"/>
    <property type="match status" value="1"/>
</dbReference>
<dbReference type="Pfam" id="PF19302">
    <property type="entry name" value="DUF5915"/>
    <property type="match status" value="1"/>
</dbReference>
<dbReference type="Pfam" id="PF00133">
    <property type="entry name" value="tRNA-synt_1"/>
    <property type="match status" value="1"/>
</dbReference>
<dbReference type="PRINTS" id="PR00984">
    <property type="entry name" value="TRNASYNTHILE"/>
</dbReference>
<dbReference type="SUPFAM" id="SSF47323">
    <property type="entry name" value="Anticodon-binding domain of a subclass of class I aminoacyl-tRNA synthetases"/>
    <property type="match status" value="1"/>
</dbReference>
<dbReference type="SUPFAM" id="SSF52374">
    <property type="entry name" value="Nucleotidylyl transferase"/>
    <property type="match status" value="1"/>
</dbReference>
<dbReference type="SUPFAM" id="SSF50677">
    <property type="entry name" value="ValRS/IleRS/LeuRS editing domain"/>
    <property type="match status" value="1"/>
</dbReference>